<sequence length="44" mass="4797">MKSKWMSGLLLVAVGFSFTQVMVHAGETANTEGKTFHIAARNQT</sequence>
<protein>
    <recommendedName>
        <fullName evidence="11">Phosphatase RapA inhibitor</fullName>
    </recommendedName>
    <alternativeName>
        <fullName>Phosphatase regulator A</fullName>
    </alternativeName>
</protein>
<reference key="1">
    <citation type="journal article" date="1992" name="J. Bacteriol.">
        <title>Transcriptional regulation of Bacillus subtilis glucose starvation-inducible genes: control of gsiA by the ComP-ComA signal transduction system.</title>
        <authorList>
            <person name="Mueller J.P."/>
            <person name="Bukusoglu G."/>
            <person name="Sonenshein A.L."/>
        </authorList>
    </citation>
    <scope>NUCLEOTIDE SEQUENCE [GENOMIC DNA]</scope>
    <source>
        <strain>168</strain>
    </source>
</reference>
<reference key="2">
    <citation type="submission" date="1997-11" db="EMBL/GenBank/DDBJ databases">
        <title>Sequencing and characterisation of the region comprising xlyB, the second lytic enzyme of the defective prophage PBSX of Bacillus subtilis.</title>
        <authorList>
            <person name="da Silva E."/>
            <person name="Karamata D."/>
        </authorList>
    </citation>
    <scope>NUCLEOTIDE SEQUENCE [GENOMIC DNA]</scope>
    <source>
        <strain>168</strain>
    </source>
</reference>
<reference key="3">
    <citation type="journal article" date="1997" name="Nature">
        <title>The complete genome sequence of the Gram-positive bacterium Bacillus subtilis.</title>
        <authorList>
            <person name="Kunst F."/>
            <person name="Ogasawara N."/>
            <person name="Moszer I."/>
            <person name="Albertini A.M."/>
            <person name="Alloni G."/>
            <person name="Azevedo V."/>
            <person name="Bertero M.G."/>
            <person name="Bessieres P."/>
            <person name="Bolotin A."/>
            <person name="Borchert S."/>
            <person name="Borriss R."/>
            <person name="Boursier L."/>
            <person name="Brans A."/>
            <person name="Braun M."/>
            <person name="Brignell S.C."/>
            <person name="Bron S."/>
            <person name="Brouillet S."/>
            <person name="Bruschi C.V."/>
            <person name="Caldwell B."/>
            <person name="Capuano V."/>
            <person name="Carter N.M."/>
            <person name="Choi S.-K."/>
            <person name="Codani J.-J."/>
            <person name="Connerton I.F."/>
            <person name="Cummings N.J."/>
            <person name="Daniel R.A."/>
            <person name="Denizot F."/>
            <person name="Devine K.M."/>
            <person name="Duesterhoeft A."/>
            <person name="Ehrlich S.D."/>
            <person name="Emmerson P.T."/>
            <person name="Entian K.-D."/>
            <person name="Errington J."/>
            <person name="Fabret C."/>
            <person name="Ferrari E."/>
            <person name="Foulger D."/>
            <person name="Fritz C."/>
            <person name="Fujita M."/>
            <person name="Fujita Y."/>
            <person name="Fuma S."/>
            <person name="Galizzi A."/>
            <person name="Galleron N."/>
            <person name="Ghim S.-Y."/>
            <person name="Glaser P."/>
            <person name="Goffeau A."/>
            <person name="Golightly E.J."/>
            <person name="Grandi G."/>
            <person name="Guiseppi G."/>
            <person name="Guy B.J."/>
            <person name="Haga K."/>
            <person name="Haiech J."/>
            <person name="Harwood C.R."/>
            <person name="Henaut A."/>
            <person name="Hilbert H."/>
            <person name="Holsappel S."/>
            <person name="Hosono S."/>
            <person name="Hullo M.-F."/>
            <person name="Itaya M."/>
            <person name="Jones L.-M."/>
            <person name="Joris B."/>
            <person name="Karamata D."/>
            <person name="Kasahara Y."/>
            <person name="Klaerr-Blanchard M."/>
            <person name="Klein C."/>
            <person name="Kobayashi Y."/>
            <person name="Koetter P."/>
            <person name="Koningstein G."/>
            <person name="Krogh S."/>
            <person name="Kumano M."/>
            <person name="Kurita K."/>
            <person name="Lapidus A."/>
            <person name="Lardinois S."/>
            <person name="Lauber J."/>
            <person name="Lazarevic V."/>
            <person name="Lee S.-M."/>
            <person name="Levine A."/>
            <person name="Liu H."/>
            <person name="Masuda S."/>
            <person name="Mauel C."/>
            <person name="Medigue C."/>
            <person name="Medina N."/>
            <person name="Mellado R.P."/>
            <person name="Mizuno M."/>
            <person name="Moestl D."/>
            <person name="Nakai S."/>
            <person name="Noback M."/>
            <person name="Noone D."/>
            <person name="O'Reilly M."/>
            <person name="Ogawa K."/>
            <person name="Ogiwara A."/>
            <person name="Oudega B."/>
            <person name="Park S.-H."/>
            <person name="Parro V."/>
            <person name="Pohl T.M."/>
            <person name="Portetelle D."/>
            <person name="Porwollik S."/>
            <person name="Prescott A.M."/>
            <person name="Presecan E."/>
            <person name="Pujic P."/>
            <person name="Purnelle B."/>
            <person name="Rapoport G."/>
            <person name="Rey M."/>
            <person name="Reynolds S."/>
            <person name="Rieger M."/>
            <person name="Rivolta C."/>
            <person name="Rocha E."/>
            <person name="Roche B."/>
            <person name="Rose M."/>
            <person name="Sadaie Y."/>
            <person name="Sato T."/>
            <person name="Scanlan E."/>
            <person name="Schleich S."/>
            <person name="Schroeter R."/>
            <person name="Scoffone F."/>
            <person name="Sekiguchi J."/>
            <person name="Sekowska A."/>
            <person name="Seror S.J."/>
            <person name="Serror P."/>
            <person name="Shin B.-S."/>
            <person name="Soldo B."/>
            <person name="Sorokin A."/>
            <person name="Tacconi E."/>
            <person name="Takagi T."/>
            <person name="Takahashi H."/>
            <person name="Takemaru K."/>
            <person name="Takeuchi M."/>
            <person name="Tamakoshi A."/>
            <person name="Tanaka T."/>
            <person name="Terpstra P."/>
            <person name="Tognoni A."/>
            <person name="Tosato V."/>
            <person name="Uchiyama S."/>
            <person name="Vandenbol M."/>
            <person name="Vannier F."/>
            <person name="Vassarotti A."/>
            <person name="Viari A."/>
            <person name="Wambutt R."/>
            <person name="Wedler E."/>
            <person name="Wedler H."/>
            <person name="Weitzenegger T."/>
            <person name="Winters P."/>
            <person name="Wipat A."/>
            <person name="Yamamoto H."/>
            <person name="Yamane K."/>
            <person name="Yasumoto K."/>
            <person name="Yata K."/>
            <person name="Yoshida K."/>
            <person name="Yoshikawa H.-F."/>
            <person name="Zumstein E."/>
            <person name="Yoshikawa H."/>
            <person name="Danchin A."/>
        </authorList>
    </citation>
    <scope>NUCLEOTIDE SEQUENCE [LARGE SCALE GENOMIC DNA]</scope>
    <source>
        <strain>168</strain>
    </source>
</reference>
<reference key="4">
    <citation type="journal article" date="1996" name="Proc. Natl. Acad. Sci. U.S.A.">
        <title>Cell-cell communication regulates the effects of protein aspartate phosphatases on the phosphorelay controlling development in Bacillus subtilis.</title>
        <authorList>
            <person name="Perego M."/>
            <person name="Hoch J.A."/>
        </authorList>
    </citation>
    <scope>FUNCTION</scope>
    <scope>SUBCELLULAR LOCATION</scope>
    <source>
        <strain>168 / JH642</strain>
    </source>
</reference>
<reference key="5">
    <citation type="journal article" date="1997" name="Cell">
        <title>An exported peptide functions intracellularly to contribute to cell density signaling in B. subtilis.</title>
        <authorList>
            <person name="Lazazzera B.A."/>
            <person name="Solomon J.M."/>
            <person name="Grossman A.D."/>
        </authorList>
    </citation>
    <scope>FUNCTION</scope>
    <scope>SUBCELLULAR LOCATION</scope>
    <source>
        <strain>168 / JH642</strain>
    </source>
</reference>
<reference key="6">
    <citation type="journal article" date="1997" name="Proc. Natl. Acad. Sci. U.S.A.">
        <title>A peptide export-import control circuit modulating bacterial development regulates protein phosphatases of the phosphorelay.</title>
        <authorList>
            <person name="Perego M."/>
        </authorList>
    </citation>
    <scope>FUNCTION</scope>
    <scope>SUBCELLULAR LOCATION</scope>
    <scope>MUTAGENESIS OF ALA-40; ASN-42 AND GLN-43</scope>
    <source>
        <strain>168 / JH642</strain>
    </source>
</reference>
<reference key="7">
    <citation type="journal article" date="2001" name="Peptides">
        <title>A free terminal carboxylate group is required for PhrA pentapeptide inhibition of RapA phosphatase.</title>
        <authorList>
            <person name="Core L.J."/>
            <person name="Ishikawa S."/>
            <person name="Perego M."/>
        </authorList>
    </citation>
    <scope>ACTIVITY REGULATION</scope>
</reference>
<reference key="8">
    <citation type="journal article" date="2003" name="J. Bacteriol.">
        <title>Molecular analysis of Phr peptide processing in Bacillus subtilis.</title>
        <authorList>
            <person name="Stephenson S."/>
            <person name="Mueller C."/>
            <person name="Jiang M."/>
            <person name="Perego M."/>
        </authorList>
    </citation>
    <scope>CLEAVAGE SITE</scope>
    <scope>MUTAGENESIS OF 23-VAL--ALA-25; HIS-37; ILE-38 AND ALA-39</scope>
    <source>
        <strain>168 / JH642</strain>
    </source>
</reference>
<reference key="9">
    <citation type="journal article" date="2007" name="Mol. Microbiol.">
        <title>Identification of subtilisin, Epr and Vpr as enzymes that produce CSF, an extracellular signalling peptide of Bacillus subtilis.</title>
        <authorList>
            <person name="Lanigan-Gerdes S."/>
            <person name="Dooley A.N."/>
            <person name="Faull K.F."/>
            <person name="Lazazzera B.A."/>
        </authorList>
    </citation>
    <scope>PROTEOLYTIC PROCESSING</scope>
    <scope>CLEAVAGE SITE</scope>
    <scope>IDENTIFICATION BY MASS SPECTROMETRY</scope>
</reference>
<reference key="10">
    <citation type="journal article" date="2002" name="J. Biol. Chem.">
        <title>Biochemical characterization of aspartyl phosphate phosphatase interaction with a phosphorylated response regulator and its inhibition by a pentapeptide.</title>
        <authorList>
            <person name="Ishikawa S."/>
            <person name="Core L."/>
            <person name="Perego M."/>
        </authorList>
    </citation>
    <scope>FUNCTION</scope>
    <scope>INTERACTION WITH RAPA</scope>
</reference>
<reference key="11">
    <citation type="journal article" date="2012" name="J. Bacteriol.">
        <title>Bacillus subtilis RapA phosphatase domain interaction with its substrate, phosphorylated Spo0F, and its inhibitor, the PhrA peptide.</title>
        <authorList>
            <person name="Diaz A.R."/>
            <person name="Core L.J."/>
            <person name="Jiang M."/>
            <person name="Morelli M."/>
            <person name="Chiang C.H."/>
            <person name="Szurmant H."/>
            <person name="Perego M."/>
        </authorList>
    </citation>
    <scope>FUNCTION</scope>
    <scope>INTERACTION WITH RAPA</scope>
    <source>
        <strain>168 / JH642</strain>
    </source>
</reference>
<feature type="propeptide" id="PRO_0000456996" evidence="13">
    <location>
        <begin position="1"/>
        <end position="39"/>
    </location>
</feature>
<feature type="peptide" id="PRO_0000161728" description="Phosphatase RapA inhibitor" evidence="4">
    <location>
        <begin position="40"/>
        <end position="44"/>
    </location>
</feature>
<feature type="site" description="Cleavage; by serine proteases" evidence="4 12">
    <location>
        <begin position="39"/>
        <end position="40"/>
    </location>
</feature>
<feature type="mutagenesis site" description="Restores a sporulation-proficient phenotype in a phrA deletion mutant." evidence="3">
    <original>VHA</original>
    <variation>PLP</variation>
    <location>
        <begin position="23"/>
        <end position="25"/>
    </location>
</feature>
<feature type="mutagenesis site" description="Restores reduced sporulation efficiency in a phrA deletion mutant." evidence="3">
    <original>H</original>
    <variation>A</variation>
    <location>
        <position position="37"/>
    </location>
</feature>
<feature type="mutagenesis site" description="Restores a sporulation-proficient phenotype in a phrA deletion mutant." evidence="3">
    <original>H</original>
    <variation>P</variation>
    <location>
        <position position="37"/>
    </location>
</feature>
<feature type="mutagenesis site" description="Restores a sporulation-proficient phenotype in a phrA deletion mutant." evidence="3">
    <original>I</original>
    <variation>P</variation>
    <location>
        <position position="38"/>
    </location>
</feature>
<feature type="mutagenesis site" description="Cannot restore a sporulation-proficient phenotype in a phrA deletion mutant." evidence="3">
    <original>A</original>
    <variation>P</variation>
    <location>
        <position position="39"/>
    </location>
</feature>
<feature type="mutagenesis site" description="Slightly inhibits both RapA and RapB." evidence="8">
    <original>A</original>
    <variation>E</variation>
    <location>
        <position position="40"/>
    </location>
</feature>
<feature type="mutagenesis site" description="Loss of inhibitory activity." evidence="8">
    <original>N</original>
    <variation>G</variation>
    <location>
        <position position="42"/>
    </location>
</feature>
<feature type="mutagenesis site" description="Retains partial activity toward RapA and shows activity toward RapB." evidence="8">
    <original>Q</original>
    <variation>M</variation>
    <location>
        <position position="43"/>
    </location>
</feature>
<gene>
    <name evidence="10" type="primary">phrA</name>
    <name evidence="9" type="synonym">gsiAB</name>
    <name type="ordered locus">BSU12440</name>
</gene>
<proteinExistence type="evidence at protein level"/>
<evidence type="ECO:0000269" key="1">
    <source>
    </source>
</evidence>
<evidence type="ECO:0000269" key="2">
    <source>
    </source>
</evidence>
<evidence type="ECO:0000269" key="3">
    <source>
    </source>
</evidence>
<evidence type="ECO:0000269" key="4">
    <source>
    </source>
</evidence>
<evidence type="ECO:0000269" key="5">
    <source>
    </source>
</evidence>
<evidence type="ECO:0000269" key="6">
    <source>
    </source>
</evidence>
<evidence type="ECO:0000269" key="7">
    <source>
    </source>
</evidence>
<evidence type="ECO:0000269" key="8">
    <source>
    </source>
</evidence>
<evidence type="ECO:0000303" key="9">
    <source>
    </source>
</evidence>
<evidence type="ECO:0000303" key="10">
    <source>
    </source>
</evidence>
<evidence type="ECO:0000305" key="11"/>
<evidence type="ECO:0000305" key="12">
    <source>
    </source>
</evidence>
<evidence type="ECO:0000305" key="13">
    <source>
    </source>
</evidence>
<evidence type="ECO:0000305" key="14">
    <source>
    </source>
</evidence>
<comment type="function">
    <text evidence="2 5 6 7 8">Signaling molecule involved in the regulation of sporulation (PubMed:8643670, PubMed:9238025). Secreted during production, but the mature peptide acts intracellularly, indicating that it needs to be imported into the cell to function (PubMed:8643670, PubMed:9200610, PubMed:9238025). Inhibitor of the RapA phosphatase activity (PubMed:11923303, PubMed:22267516, PubMed:8643670, PubMed:9238025). Does not act on RapB (PubMed:9238025).</text>
</comment>
<comment type="activity regulation">
    <text evidence="1">Inhibition of RapA requires a free carboxylate group at the C-terminal end of the PhrA pentapeptide (PubMed:11587784). A free C-terminal carboxylic acid PhrA pentapeptide inhibits RapA phosphatase activity at a 1:1 ratio and is approximately 200 fold more active than a C-terminal amide peptide (PubMed:11587784).</text>
</comment>
<comment type="subunit">
    <text evidence="2 5">Interacts with RapA and inhibits its interaction with Spo0F.</text>
</comment>
<comment type="subcellular location">
    <subcellularLocation>
        <location evidence="7">Secreted</location>
    </subcellularLocation>
    <subcellularLocation>
        <location evidence="7">Cytoplasm</location>
    </subcellularLocation>
    <text evidence="6 7 8 14">Produced through an export-import maturation process (PubMed:8643670, PubMed:9238025). Peptides are secreted by the bacterium, and are then actively transported into the cell where they interact with intracellular receptors to regulate gene expression (PubMed:8643670, PubMed:9200610). Probably transported into the cell by the Opp (Spo0K) oligopeptide permease (Probable) (PubMed:8643670).</text>
</comment>
<comment type="PTM">
    <text evidence="4 12">Secreted with a propeptide domain, which is cleaved in the cell wall by the secreted serine proteases subtilisin and Vpr to produce a mature signaling peptide (PubMed:17666034). Contains a predicted signal peptide cleavage site in the N-terminal region, however the propeptide is probably subject to only one processing event, at the N-terminal end of the mature peptide (Probable).</text>
</comment>
<comment type="similarity">
    <text evidence="11">Belongs to the Phr family.</text>
</comment>
<accession>Q00829</accession>
<organism>
    <name type="scientific">Bacillus subtilis (strain 168)</name>
    <dbReference type="NCBI Taxonomy" id="224308"/>
    <lineage>
        <taxon>Bacteria</taxon>
        <taxon>Bacillati</taxon>
        <taxon>Bacillota</taxon>
        <taxon>Bacilli</taxon>
        <taxon>Bacillales</taxon>
        <taxon>Bacillaceae</taxon>
        <taxon>Bacillus</taxon>
    </lineage>
</organism>
<keyword id="KW-0963">Cytoplasm</keyword>
<keyword id="KW-1185">Reference proteome</keyword>
<keyword id="KW-0964">Secreted</keyword>
<keyword id="KW-0749">Sporulation</keyword>
<name>PHRA_BACSU</name>
<dbReference type="EMBL" id="X56679">
    <property type="protein sequence ID" value="CAA40008.1"/>
    <property type="molecule type" value="Genomic_DNA"/>
</dbReference>
<dbReference type="EMBL" id="AF034138">
    <property type="protein sequence ID" value="AAB87512.1"/>
    <property type="molecule type" value="Genomic_DNA"/>
</dbReference>
<dbReference type="EMBL" id="AL009126">
    <property type="protein sequence ID" value="CAB13101.1"/>
    <property type="molecule type" value="Genomic_DNA"/>
</dbReference>
<dbReference type="PIR" id="H69676">
    <property type="entry name" value="H69676"/>
</dbReference>
<dbReference type="RefSeq" id="NP_389126.1">
    <property type="nucleotide sequence ID" value="NC_000964.3"/>
</dbReference>
<dbReference type="RefSeq" id="WP_003245487.1">
    <property type="nucleotide sequence ID" value="NZ_OZ025638.1"/>
</dbReference>
<dbReference type="FunCoup" id="Q00829">
    <property type="interactions" value="347"/>
</dbReference>
<dbReference type="IntAct" id="Q00829">
    <property type="interactions" value="2"/>
</dbReference>
<dbReference type="STRING" id="224308.BSU12440"/>
<dbReference type="PaxDb" id="224308-BSU12440"/>
<dbReference type="EnsemblBacteria" id="CAB13101">
    <property type="protein sequence ID" value="CAB13101"/>
    <property type="gene ID" value="BSU_12440"/>
</dbReference>
<dbReference type="GeneID" id="939413"/>
<dbReference type="KEGG" id="bsu:BSU12440"/>
<dbReference type="PATRIC" id="fig|224308.179.peg.1345"/>
<dbReference type="InParanoid" id="Q00829"/>
<dbReference type="OrthoDB" id="2900120at2"/>
<dbReference type="BioCyc" id="BSUB:BSU12440-MONOMER"/>
<dbReference type="Proteomes" id="UP000001570">
    <property type="component" value="Chromosome"/>
</dbReference>
<dbReference type="GO" id="GO:0005737">
    <property type="term" value="C:cytoplasm"/>
    <property type="evidence" value="ECO:0007669"/>
    <property type="project" value="UniProtKB-SubCell"/>
</dbReference>
<dbReference type="GO" id="GO:0005576">
    <property type="term" value="C:extracellular region"/>
    <property type="evidence" value="ECO:0007669"/>
    <property type="project" value="UniProtKB-SubCell"/>
</dbReference>
<dbReference type="GO" id="GO:0030435">
    <property type="term" value="P:sporulation resulting in formation of a cellular spore"/>
    <property type="evidence" value="ECO:0007669"/>
    <property type="project" value="UniProtKB-KW"/>
</dbReference>
<dbReference type="InterPro" id="IPR053668">
    <property type="entry name" value="PhrA_inhibitor"/>
</dbReference>
<dbReference type="NCBIfam" id="NF033799">
    <property type="entry name" value="inhib_PhrA"/>
    <property type="match status" value="1"/>
</dbReference>